<protein>
    <recommendedName>
        <fullName evidence="1">Large ribosomal subunit protein uL30</fullName>
    </recommendedName>
    <alternativeName>
        <fullName evidence="2">50S ribosomal protein L30</fullName>
    </alternativeName>
</protein>
<dbReference type="EMBL" id="AE016823">
    <property type="protein sequence ID" value="AAS71408.1"/>
    <property type="molecule type" value="Genomic_DNA"/>
</dbReference>
<dbReference type="RefSeq" id="WP_000427711.1">
    <property type="nucleotide sequence ID" value="NC_005823.1"/>
</dbReference>
<dbReference type="SMR" id="Q72NH9"/>
<dbReference type="GeneID" id="61142729"/>
<dbReference type="KEGG" id="lic:LIC_12855"/>
<dbReference type="HOGENOM" id="CLU_131047_1_1_12"/>
<dbReference type="Proteomes" id="UP000007037">
    <property type="component" value="Chromosome I"/>
</dbReference>
<dbReference type="GO" id="GO:0022625">
    <property type="term" value="C:cytosolic large ribosomal subunit"/>
    <property type="evidence" value="ECO:0007669"/>
    <property type="project" value="TreeGrafter"/>
</dbReference>
<dbReference type="GO" id="GO:0003735">
    <property type="term" value="F:structural constituent of ribosome"/>
    <property type="evidence" value="ECO:0007669"/>
    <property type="project" value="InterPro"/>
</dbReference>
<dbReference type="GO" id="GO:0006412">
    <property type="term" value="P:translation"/>
    <property type="evidence" value="ECO:0007669"/>
    <property type="project" value="UniProtKB-UniRule"/>
</dbReference>
<dbReference type="CDD" id="cd01658">
    <property type="entry name" value="Ribosomal_L30"/>
    <property type="match status" value="1"/>
</dbReference>
<dbReference type="FunFam" id="3.30.1390.20:FF:000011">
    <property type="entry name" value="50S ribosomal protein L30"/>
    <property type="match status" value="1"/>
</dbReference>
<dbReference type="Gene3D" id="3.30.1390.20">
    <property type="entry name" value="Ribosomal protein L30, ferredoxin-like fold domain"/>
    <property type="match status" value="1"/>
</dbReference>
<dbReference type="HAMAP" id="MF_01371_B">
    <property type="entry name" value="Ribosomal_uL30_B"/>
    <property type="match status" value="1"/>
</dbReference>
<dbReference type="InterPro" id="IPR036919">
    <property type="entry name" value="Ribo_uL30_ferredoxin-like_sf"/>
</dbReference>
<dbReference type="InterPro" id="IPR005996">
    <property type="entry name" value="Ribosomal_uL30_bac-type"/>
</dbReference>
<dbReference type="InterPro" id="IPR018038">
    <property type="entry name" value="Ribosomal_uL30_CS"/>
</dbReference>
<dbReference type="InterPro" id="IPR016082">
    <property type="entry name" value="Ribosomal_uL30_ferredoxin-like"/>
</dbReference>
<dbReference type="NCBIfam" id="TIGR01308">
    <property type="entry name" value="rpmD_bact"/>
    <property type="match status" value="1"/>
</dbReference>
<dbReference type="PANTHER" id="PTHR15892:SF2">
    <property type="entry name" value="LARGE RIBOSOMAL SUBUNIT PROTEIN UL30M"/>
    <property type="match status" value="1"/>
</dbReference>
<dbReference type="PANTHER" id="PTHR15892">
    <property type="entry name" value="MITOCHONDRIAL RIBOSOMAL PROTEIN L30"/>
    <property type="match status" value="1"/>
</dbReference>
<dbReference type="Pfam" id="PF00327">
    <property type="entry name" value="Ribosomal_L30"/>
    <property type="match status" value="1"/>
</dbReference>
<dbReference type="PIRSF" id="PIRSF002211">
    <property type="entry name" value="Ribosomal_L30_bac-type"/>
    <property type="match status" value="1"/>
</dbReference>
<dbReference type="SUPFAM" id="SSF55129">
    <property type="entry name" value="Ribosomal protein L30p/L7e"/>
    <property type="match status" value="1"/>
</dbReference>
<dbReference type="PROSITE" id="PS00634">
    <property type="entry name" value="RIBOSOMAL_L30"/>
    <property type="match status" value="1"/>
</dbReference>
<sequence length="59" mass="6694">MENIIVTQVKSSIGVKKEHKLTLHALGLRRTGQQRKHKVSPQLQGMLNSVRHLIKVEKA</sequence>
<feature type="chain" id="PRO_0000104595" description="Large ribosomal subunit protein uL30">
    <location>
        <begin position="1"/>
        <end position="59"/>
    </location>
</feature>
<proteinExistence type="inferred from homology"/>
<accession>Q72NH9</accession>
<keyword id="KW-0687">Ribonucleoprotein</keyword>
<keyword id="KW-0689">Ribosomal protein</keyword>
<comment type="subunit">
    <text evidence="1">Part of the 50S ribosomal subunit.</text>
</comment>
<comment type="similarity">
    <text evidence="1">Belongs to the universal ribosomal protein uL30 family.</text>
</comment>
<reference key="1">
    <citation type="journal article" date="2004" name="J. Bacteriol.">
        <title>Comparative genomics of two Leptospira interrogans serovars reveals novel insights into physiology and pathogenesis.</title>
        <authorList>
            <person name="Nascimento A.L.T.O."/>
            <person name="Ko A.I."/>
            <person name="Martins E.A.L."/>
            <person name="Monteiro-Vitorello C.B."/>
            <person name="Ho P.L."/>
            <person name="Haake D.A."/>
            <person name="Verjovski-Almeida S."/>
            <person name="Hartskeerl R.A."/>
            <person name="Marques M.V."/>
            <person name="Oliveira M.C."/>
            <person name="Menck C.F.M."/>
            <person name="Leite L.C.C."/>
            <person name="Carrer H."/>
            <person name="Coutinho L.L."/>
            <person name="Degrave W.M."/>
            <person name="Dellagostin O.A."/>
            <person name="El-Dorry H."/>
            <person name="Ferro E.S."/>
            <person name="Ferro M.I.T."/>
            <person name="Furlan L.R."/>
            <person name="Gamberini M."/>
            <person name="Giglioti E.A."/>
            <person name="Goes-Neto A."/>
            <person name="Goldman G.H."/>
            <person name="Goldman M.H.S."/>
            <person name="Harakava R."/>
            <person name="Jeronimo S.M.B."/>
            <person name="Junqueira-de-Azevedo I.L.M."/>
            <person name="Kimura E.T."/>
            <person name="Kuramae E.E."/>
            <person name="Lemos E.G.M."/>
            <person name="Lemos M.V.F."/>
            <person name="Marino C.L."/>
            <person name="Nunes L.R."/>
            <person name="de Oliveira R.C."/>
            <person name="Pereira G.G."/>
            <person name="Reis M.S."/>
            <person name="Schriefer A."/>
            <person name="Siqueira W.J."/>
            <person name="Sommer P."/>
            <person name="Tsai S.M."/>
            <person name="Simpson A.J.G."/>
            <person name="Ferro J.A."/>
            <person name="Camargo L.E.A."/>
            <person name="Kitajima J.P."/>
            <person name="Setubal J.C."/>
            <person name="Van Sluys M.A."/>
        </authorList>
    </citation>
    <scope>NUCLEOTIDE SEQUENCE [LARGE SCALE GENOMIC DNA]</scope>
    <source>
        <strain>Fiocruz L1-130</strain>
    </source>
</reference>
<evidence type="ECO:0000255" key="1">
    <source>
        <dbReference type="HAMAP-Rule" id="MF_01371"/>
    </source>
</evidence>
<evidence type="ECO:0000305" key="2"/>
<gene>
    <name evidence="1" type="primary">rpmD</name>
    <name type="ordered locus">LIC_12855</name>
</gene>
<name>RL30_LEPIC</name>
<organism>
    <name type="scientific">Leptospira interrogans serogroup Icterohaemorrhagiae serovar copenhageni (strain Fiocruz L1-130)</name>
    <dbReference type="NCBI Taxonomy" id="267671"/>
    <lineage>
        <taxon>Bacteria</taxon>
        <taxon>Pseudomonadati</taxon>
        <taxon>Spirochaetota</taxon>
        <taxon>Spirochaetia</taxon>
        <taxon>Leptospirales</taxon>
        <taxon>Leptospiraceae</taxon>
        <taxon>Leptospira</taxon>
    </lineage>
</organism>